<protein>
    <recommendedName>
        <fullName evidence="1">Co-chaperonin GroES</fullName>
    </recommendedName>
    <alternativeName>
        <fullName evidence="1">10 kDa chaperonin</fullName>
    </alternativeName>
    <alternativeName>
        <fullName evidence="1">Chaperonin-10</fullName>
        <shortName evidence="1">Cpn10</shortName>
    </alternativeName>
</protein>
<name>CH10_BRUSU</name>
<sequence length="98" mass="10393">MADIKFRPLHDRVVVRRVESEAKTAGGIIIPDTAKEKPQEGEVVAAGAGARDEAGKLVPLDVKAGDRVLFGKWSGTEVKIGGEDLLIMKESDILGIVG</sequence>
<evidence type="ECO:0000255" key="1">
    <source>
        <dbReference type="HAMAP-Rule" id="MF_00580"/>
    </source>
</evidence>
<evidence type="ECO:0000305" key="2"/>
<reference key="1">
    <citation type="journal article" date="2002" name="Proc. Natl. Acad. Sci. U.S.A.">
        <title>The Brucella suis genome reveals fundamental similarities between animal and plant pathogens and symbionts.</title>
        <authorList>
            <person name="Paulsen I.T."/>
            <person name="Seshadri R."/>
            <person name="Nelson K.E."/>
            <person name="Eisen J.A."/>
            <person name="Heidelberg J.F."/>
            <person name="Read T.D."/>
            <person name="Dodson R.J."/>
            <person name="Umayam L.A."/>
            <person name="Brinkac L.M."/>
            <person name="Beanan M.J."/>
            <person name="Daugherty S.C."/>
            <person name="DeBoy R.T."/>
            <person name="Durkin A.S."/>
            <person name="Kolonay J.F."/>
            <person name="Madupu R."/>
            <person name="Nelson W.C."/>
            <person name="Ayodeji B."/>
            <person name="Kraul M."/>
            <person name="Shetty J."/>
            <person name="Malek J.A."/>
            <person name="Van Aken S.E."/>
            <person name="Riedmuller S."/>
            <person name="Tettelin H."/>
            <person name="Gill S.R."/>
            <person name="White O."/>
            <person name="Salzberg S.L."/>
            <person name="Hoover D.L."/>
            <person name="Lindler L.E."/>
            <person name="Halling S.M."/>
            <person name="Boyle S.M."/>
            <person name="Fraser C.M."/>
        </authorList>
    </citation>
    <scope>NUCLEOTIDE SEQUENCE [LARGE SCALE GENOMIC DNA]</scope>
    <source>
        <strain>1330</strain>
    </source>
</reference>
<reference key="2">
    <citation type="journal article" date="2011" name="J. Bacteriol.">
        <title>Revised genome sequence of Brucella suis 1330.</title>
        <authorList>
            <person name="Tae H."/>
            <person name="Shallom S."/>
            <person name="Settlage R."/>
            <person name="Preston D."/>
            <person name="Adams L.G."/>
            <person name="Garner H.R."/>
        </authorList>
    </citation>
    <scope>NUCLEOTIDE SEQUENCE [LARGE SCALE GENOMIC DNA]</scope>
    <source>
        <strain>1330</strain>
    </source>
</reference>
<organism>
    <name type="scientific">Brucella suis biovar 1 (strain 1330)</name>
    <dbReference type="NCBI Taxonomy" id="204722"/>
    <lineage>
        <taxon>Bacteria</taxon>
        <taxon>Pseudomonadati</taxon>
        <taxon>Pseudomonadota</taxon>
        <taxon>Alphaproteobacteria</taxon>
        <taxon>Hyphomicrobiales</taxon>
        <taxon>Brucellaceae</taxon>
        <taxon>Brucella/Ochrobactrum group</taxon>
        <taxon>Brucella</taxon>
    </lineage>
</organism>
<keyword id="KW-0143">Chaperone</keyword>
<keyword id="KW-0963">Cytoplasm</keyword>
<keyword id="KW-0346">Stress response</keyword>
<accession>P0A343</accession>
<accession>G0KF35</accession>
<accession>P25968</accession>
<proteinExistence type="evidence at transcript level"/>
<gene>
    <name evidence="1" type="primary">groES</name>
    <name evidence="1" type="synonym">groS</name>
    <name type="ordered locus">BRA0196</name>
    <name type="ordered locus">BS1330_II0193</name>
</gene>
<feature type="chain" id="PRO_0000174711" description="Co-chaperonin GroES">
    <location>
        <begin position="1"/>
        <end position="98"/>
    </location>
</feature>
<dbReference type="EMBL" id="AE014292">
    <property type="protein sequence ID" value="AAN33402.1"/>
    <property type="molecule type" value="Genomic_DNA"/>
</dbReference>
<dbReference type="EMBL" id="CP002998">
    <property type="protein sequence ID" value="AEM19679.1"/>
    <property type="molecule type" value="Genomic_DNA"/>
</dbReference>
<dbReference type="RefSeq" id="WP_002966386.1">
    <property type="nucleotide sequence ID" value="NZ_KN046805.1"/>
</dbReference>
<dbReference type="SMR" id="P0A343"/>
<dbReference type="GeneID" id="97535613"/>
<dbReference type="KEGG" id="bms:BRA0196"/>
<dbReference type="KEGG" id="bsi:BS1330_II0193"/>
<dbReference type="PATRIC" id="fig|204722.21.peg.2119"/>
<dbReference type="HOGENOM" id="CLU_132825_1_0_5"/>
<dbReference type="Proteomes" id="UP000007104">
    <property type="component" value="Chromosome II"/>
</dbReference>
<dbReference type="GO" id="GO:0005737">
    <property type="term" value="C:cytoplasm"/>
    <property type="evidence" value="ECO:0007669"/>
    <property type="project" value="UniProtKB-SubCell"/>
</dbReference>
<dbReference type="GO" id="GO:0005524">
    <property type="term" value="F:ATP binding"/>
    <property type="evidence" value="ECO:0007669"/>
    <property type="project" value="InterPro"/>
</dbReference>
<dbReference type="GO" id="GO:0046872">
    <property type="term" value="F:metal ion binding"/>
    <property type="evidence" value="ECO:0007669"/>
    <property type="project" value="TreeGrafter"/>
</dbReference>
<dbReference type="GO" id="GO:0044183">
    <property type="term" value="F:protein folding chaperone"/>
    <property type="evidence" value="ECO:0007669"/>
    <property type="project" value="InterPro"/>
</dbReference>
<dbReference type="GO" id="GO:0051087">
    <property type="term" value="F:protein-folding chaperone binding"/>
    <property type="evidence" value="ECO:0007669"/>
    <property type="project" value="TreeGrafter"/>
</dbReference>
<dbReference type="GO" id="GO:0051082">
    <property type="term" value="F:unfolded protein binding"/>
    <property type="evidence" value="ECO:0007669"/>
    <property type="project" value="TreeGrafter"/>
</dbReference>
<dbReference type="GO" id="GO:0051085">
    <property type="term" value="P:chaperone cofactor-dependent protein refolding"/>
    <property type="evidence" value="ECO:0007669"/>
    <property type="project" value="TreeGrafter"/>
</dbReference>
<dbReference type="CDD" id="cd00320">
    <property type="entry name" value="cpn10"/>
    <property type="match status" value="1"/>
</dbReference>
<dbReference type="FunFam" id="2.30.33.40:FF:000001">
    <property type="entry name" value="10 kDa chaperonin"/>
    <property type="match status" value="1"/>
</dbReference>
<dbReference type="Gene3D" id="2.30.33.40">
    <property type="entry name" value="GroES chaperonin"/>
    <property type="match status" value="1"/>
</dbReference>
<dbReference type="HAMAP" id="MF_00580">
    <property type="entry name" value="CH10"/>
    <property type="match status" value="1"/>
</dbReference>
<dbReference type="InterPro" id="IPR020818">
    <property type="entry name" value="Chaperonin_GroES"/>
</dbReference>
<dbReference type="InterPro" id="IPR037124">
    <property type="entry name" value="Chaperonin_GroES_sf"/>
</dbReference>
<dbReference type="InterPro" id="IPR018369">
    <property type="entry name" value="Chaprnonin_Cpn10_CS"/>
</dbReference>
<dbReference type="InterPro" id="IPR011032">
    <property type="entry name" value="GroES-like_sf"/>
</dbReference>
<dbReference type="NCBIfam" id="NF001527">
    <property type="entry name" value="PRK00364.1-2"/>
    <property type="match status" value="1"/>
</dbReference>
<dbReference type="NCBIfam" id="NF001529">
    <property type="entry name" value="PRK00364.1-5"/>
    <property type="match status" value="1"/>
</dbReference>
<dbReference type="NCBIfam" id="NF001531">
    <property type="entry name" value="PRK00364.2-2"/>
    <property type="match status" value="1"/>
</dbReference>
<dbReference type="NCBIfam" id="NF001533">
    <property type="entry name" value="PRK00364.2-4"/>
    <property type="match status" value="1"/>
</dbReference>
<dbReference type="NCBIfam" id="NF001534">
    <property type="entry name" value="PRK00364.2-5"/>
    <property type="match status" value="1"/>
</dbReference>
<dbReference type="PANTHER" id="PTHR10772">
    <property type="entry name" value="10 KDA HEAT SHOCK PROTEIN"/>
    <property type="match status" value="1"/>
</dbReference>
<dbReference type="PANTHER" id="PTHR10772:SF58">
    <property type="entry name" value="CO-CHAPERONIN GROES"/>
    <property type="match status" value="1"/>
</dbReference>
<dbReference type="Pfam" id="PF00166">
    <property type="entry name" value="Cpn10"/>
    <property type="match status" value="1"/>
</dbReference>
<dbReference type="PRINTS" id="PR00297">
    <property type="entry name" value="CHAPERONIN10"/>
</dbReference>
<dbReference type="SMART" id="SM00883">
    <property type="entry name" value="Cpn10"/>
    <property type="match status" value="1"/>
</dbReference>
<dbReference type="SUPFAM" id="SSF50129">
    <property type="entry name" value="GroES-like"/>
    <property type="match status" value="1"/>
</dbReference>
<dbReference type="PROSITE" id="PS00681">
    <property type="entry name" value="CHAPERONINS_CPN10"/>
    <property type="match status" value="1"/>
</dbReference>
<comment type="function">
    <text evidence="1">Together with the chaperonin GroEL, plays an essential role in assisting protein folding. The GroEL-GroES system forms a nano-cage that allows encapsulation of the non-native substrate proteins and provides a physical environment optimized to promote and accelerate protein folding. GroES binds to the apical surface of the GroEL ring, thereby capping the opening of the GroEL channel.</text>
</comment>
<comment type="subunit">
    <text evidence="1">Heptamer of 7 subunits arranged in a ring. Interacts with the chaperonin GroEL.</text>
</comment>
<comment type="subcellular location">
    <subcellularLocation>
        <location evidence="1">Cytoplasm</location>
    </subcellularLocation>
</comment>
<comment type="induction">
    <text>By heat shock.</text>
</comment>
<comment type="similarity">
    <text evidence="1 2">Belongs to the GroES chaperonin family.</text>
</comment>